<keyword id="KW-0309">Germination</keyword>
<keyword id="KW-1185">Reference proteome</keyword>
<keyword id="KW-0749">Sporulation</keyword>
<dbReference type="EMBL" id="AE016879">
    <property type="protein sequence ID" value="AAP25119.1"/>
    <property type="molecule type" value="Genomic_DNA"/>
</dbReference>
<dbReference type="EMBL" id="AE017334">
    <property type="protein sequence ID" value="AAT30242.1"/>
    <property type="molecule type" value="Genomic_DNA"/>
</dbReference>
<dbReference type="EMBL" id="AE017225">
    <property type="protein sequence ID" value="AAT53391.1"/>
    <property type="molecule type" value="Genomic_DNA"/>
</dbReference>
<dbReference type="RefSeq" id="NP_843633.1">
    <property type="nucleotide sequence ID" value="NC_003997.3"/>
</dbReference>
<dbReference type="RefSeq" id="WP_001111188.1">
    <property type="nucleotide sequence ID" value="NZ_WXXJ01000044.1"/>
</dbReference>
<dbReference type="RefSeq" id="YP_027340.1">
    <property type="nucleotide sequence ID" value="NC_005945.1"/>
</dbReference>
<dbReference type="STRING" id="261594.GBAA_1149"/>
<dbReference type="DNASU" id="1089127"/>
<dbReference type="GeneID" id="83634774"/>
<dbReference type="KEGG" id="ban:BA_1149"/>
<dbReference type="KEGG" id="bar:GBAA_1149"/>
<dbReference type="KEGG" id="bat:BAS1068"/>
<dbReference type="PATRIC" id="fig|198094.11.peg.1130"/>
<dbReference type="eggNOG" id="ENOG50332FH">
    <property type="taxonomic scope" value="Bacteria"/>
</dbReference>
<dbReference type="HOGENOM" id="CLU_173188_0_0_9"/>
<dbReference type="OMA" id="IHIGDCI"/>
<dbReference type="OrthoDB" id="2691926at2"/>
<dbReference type="Proteomes" id="UP000000427">
    <property type="component" value="Chromosome"/>
</dbReference>
<dbReference type="Proteomes" id="UP000000594">
    <property type="component" value="Chromosome"/>
</dbReference>
<dbReference type="GO" id="GO:0030436">
    <property type="term" value="P:asexual sporulation"/>
    <property type="evidence" value="ECO:0000304"/>
    <property type="project" value="TIGR"/>
</dbReference>
<dbReference type="GO" id="GO:0009847">
    <property type="term" value="P:spore germination"/>
    <property type="evidence" value="ECO:0000304"/>
    <property type="project" value="TIGR"/>
</dbReference>
<dbReference type="GO" id="GO:0030435">
    <property type="term" value="P:sporulation resulting in formation of a cellular spore"/>
    <property type="evidence" value="ECO:0007669"/>
    <property type="project" value="UniProtKB-KW"/>
</dbReference>
<dbReference type="InterPro" id="IPR019618">
    <property type="entry name" value="Spore_germination_GerPA"/>
</dbReference>
<dbReference type="PANTHER" id="PTHR37808:SF3">
    <property type="entry name" value="SPORE GERMINATION PROTEIN GERPA-RELATED"/>
    <property type="match status" value="1"/>
</dbReference>
<dbReference type="PANTHER" id="PTHR37808">
    <property type="entry name" value="SPORE GERMINATION PROTEIN-LIKE PROTEIN YDZR-RELATED"/>
    <property type="match status" value="1"/>
</dbReference>
<dbReference type="Pfam" id="PF10676">
    <property type="entry name" value="gerPA"/>
    <property type="match status" value="1"/>
</dbReference>
<comment type="function">
    <text evidence="1">Required for the formation of functionally normal spores. Could be involved in the establishment of normal spore coat structure and/or permeability, which allows the access of germinants to their receptor (By similarity).</text>
</comment>
<comment type="similarity">
    <text evidence="2">Belongs to the GerPA/GerPF family.</text>
</comment>
<protein>
    <recommendedName>
        <fullName>Probable spore germination protein GerPA</fullName>
    </recommendedName>
</protein>
<name>GERPA_BACAN</name>
<sequence>MPAMVGHIRIVNIGSSGIFHIGDVFAIRPISYSRAFAGAGSFNVGDNVSVYNYQSATTVNDSDVVDQAIIGST</sequence>
<proteinExistence type="inferred from homology"/>
<feature type="chain" id="PRO_0000105871" description="Probable spore germination protein GerPA">
    <location>
        <begin position="1"/>
        <end position="73"/>
    </location>
</feature>
<gene>
    <name type="primary">gerPA</name>
    <name type="ordered locus">BA_1149</name>
    <name type="ordered locus">GBAA_1149</name>
    <name type="ordered locus">BAS1068</name>
</gene>
<organism>
    <name type="scientific">Bacillus anthracis</name>
    <dbReference type="NCBI Taxonomy" id="1392"/>
    <lineage>
        <taxon>Bacteria</taxon>
        <taxon>Bacillati</taxon>
        <taxon>Bacillota</taxon>
        <taxon>Bacilli</taxon>
        <taxon>Bacillales</taxon>
        <taxon>Bacillaceae</taxon>
        <taxon>Bacillus</taxon>
        <taxon>Bacillus cereus group</taxon>
    </lineage>
</organism>
<accession>P62164</accession>
<accession>O68683</accession>
<accession>Q6I240</accession>
<accession>Q6KVX6</accession>
<reference key="1">
    <citation type="journal article" date="2003" name="Nature">
        <title>The genome sequence of Bacillus anthracis Ames and comparison to closely related bacteria.</title>
        <authorList>
            <person name="Read T.D."/>
            <person name="Peterson S.N."/>
            <person name="Tourasse N.J."/>
            <person name="Baillie L.W."/>
            <person name="Paulsen I.T."/>
            <person name="Nelson K.E."/>
            <person name="Tettelin H."/>
            <person name="Fouts D.E."/>
            <person name="Eisen J.A."/>
            <person name="Gill S.R."/>
            <person name="Holtzapple E.K."/>
            <person name="Okstad O.A."/>
            <person name="Helgason E."/>
            <person name="Rilstone J."/>
            <person name="Wu M."/>
            <person name="Kolonay J.F."/>
            <person name="Beanan M.J."/>
            <person name="Dodson R.J."/>
            <person name="Brinkac L.M."/>
            <person name="Gwinn M.L."/>
            <person name="DeBoy R.T."/>
            <person name="Madpu R."/>
            <person name="Daugherty S.C."/>
            <person name="Durkin A.S."/>
            <person name="Haft D.H."/>
            <person name="Nelson W.C."/>
            <person name="Peterson J.D."/>
            <person name="Pop M."/>
            <person name="Khouri H.M."/>
            <person name="Radune D."/>
            <person name="Benton J.L."/>
            <person name="Mahamoud Y."/>
            <person name="Jiang L."/>
            <person name="Hance I.R."/>
            <person name="Weidman J.F."/>
            <person name="Berry K.J."/>
            <person name="Plaut R.D."/>
            <person name="Wolf A.M."/>
            <person name="Watkins K.L."/>
            <person name="Nierman W.C."/>
            <person name="Hazen A."/>
            <person name="Cline R.T."/>
            <person name="Redmond C."/>
            <person name="Thwaite J.E."/>
            <person name="White O."/>
            <person name="Salzberg S.L."/>
            <person name="Thomason B."/>
            <person name="Friedlander A.M."/>
            <person name="Koehler T.M."/>
            <person name="Hanna P.C."/>
            <person name="Kolstoe A.-B."/>
            <person name="Fraser C.M."/>
        </authorList>
    </citation>
    <scope>NUCLEOTIDE SEQUENCE [LARGE SCALE GENOMIC DNA]</scope>
    <source>
        <strain>Ames / isolate Porton</strain>
    </source>
</reference>
<reference key="2">
    <citation type="journal article" date="2009" name="J. Bacteriol.">
        <title>The complete genome sequence of Bacillus anthracis Ames 'Ancestor'.</title>
        <authorList>
            <person name="Ravel J."/>
            <person name="Jiang L."/>
            <person name="Stanley S.T."/>
            <person name="Wilson M.R."/>
            <person name="Decker R.S."/>
            <person name="Read T.D."/>
            <person name="Worsham P."/>
            <person name="Keim P.S."/>
            <person name="Salzberg S.L."/>
            <person name="Fraser-Liggett C.M."/>
            <person name="Rasko D.A."/>
        </authorList>
    </citation>
    <scope>NUCLEOTIDE SEQUENCE [LARGE SCALE GENOMIC DNA]</scope>
    <source>
        <strain>Ames ancestor</strain>
    </source>
</reference>
<reference key="3">
    <citation type="submission" date="2004-01" db="EMBL/GenBank/DDBJ databases">
        <title>Complete genome sequence of Bacillus anthracis Sterne.</title>
        <authorList>
            <person name="Brettin T.S."/>
            <person name="Bruce D."/>
            <person name="Challacombe J.F."/>
            <person name="Gilna P."/>
            <person name="Han C."/>
            <person name="Hill K."/>
            <person name="Hitchcock P."/>
            <person name="Jackson P."/>
            <person name="Keim P."/>
            <person name="Longmire J."/>
            <person name="Lucas S."/>
            <person name="Okinaka R."/>
            <person name="Richardson P."/>
            <person name="Rubin E."/>
            <person name="Tice H."/>
        </authorList>
    </citation>
    <scope>NUCLEOTIDE SEQUENCE [LARGE SCALE GENOMIC DNA]</scope>
    <source>
        <strain>Sterne</strain>
    </source>
</reference>
<evidence type="ECO:0000250" key="1"/>
<evidence type="ECO:0000305" key="2"/>